<name>PVK1_PYCSU</name>
<comment type="function">
    <text evidence="4">Mediates visceral muscle contractile activity (myotropic activity).</text>
</comment>
<comment type="subcellular location">
    <subcellularLocation>
        <location evidence="4">Secreted</location>
    </subcellularLocation>
</comment>
<comment type="tissue specificity">
    <text evidence="3">Expressed in abdominal perisympathetic organs and abdominal ganglia.</text>
</comment>
<comment type="mass spectrometry">
    <text>With amidation.</text>
</comment>
<comment type="similarity">
    <text evidence="1">Belongs to the periviscerokinin family.</text>
</comment>
<proteinExistence type="evidence at protein level"/>
<reference key="1">
    <citation type="journal article" date="2009" name="BMC Evol. Biol.">
        <title>A proteomic approach for studying insect phylogeny: CAPA peptides of ancient insect taxa (Dictyoptera, Blattoptera) as a test case.</title>
        <authorList>
            <person name="Roth S."/>
            <person name="Fromm B."/>
            <person name="Gaede G."/>
            <person name="Predel R."/>
        </authorList>
    </citation>
    <scope>PROTEIN SEQUENCE</scope>
    <scope>AMIDATION AT SER-11</scope>
    <source>
        <tissue>Abdominal perisympathetic organs</tissue>
    </source>
</reference>
<reference evidence="4" key="2">
    <citation type="submission" date="2005-09" db="UniProtKB">
        <authorList>
            <person name="Predel R."/>
        </authorList>
    </citation>
    <scope>PROTEIN SEQUENCE</scope>
    <scope>TISSUE SPECIFICITY</scope>
    <scope>MASS SPECTROMETRY</scope>
    <scope>AMIDATION AT SER-11</scope>
    <source>
        <tissue>Abdominal perisympathetic organs</tissue>
    </source>
</reference>
<protein>
    <recommendedName>
        <fullName>Periviscerokinin-1</fullName>
        <shortName>PycSu-PVK-1</shortName>
    </recommendedName>
</protein>
<feature type="peptide" id="PRO_0000044252" description="Periviscerokinin-1">
    <location>
        <begin position="1"/>
        <end position="11"/>
    </location>
</feature>
<feature type="modified residue" description="Serine amide" evidence="2 3">
    <location>
        <position position="11"/>
    </location>
</feature>
<organism>
    <name type="scientific">Pycnoscelus surinamensis</name>
    <name type="common">Surinam cockroach</name>
    <name type="synonym">Blatta surinamensis</name>
    <dbReference type="NCBI Taxonomy" id="36961"/>
    <lineage>
        <taxon>Eukaryota</taxon>
        <taxon>Metazoa</taxon>
        <taxon>Ecdysozoa</taxon>
        <taxon>Arthropoda</taxon>
        <taxon>Hexapoda</taxon>
        <taxon>Insecta</taxon>
        <taxon>Pterygota</taxon>
        <taxon>Neoptera</taxon>
        <taxon>Polyneoptera</taxon>
        <taxon>Dictyoptera</taxon>
        <taxon>Blattodea</taxon>
        <taxon>Blaberoidea</taxon>
        <taxon>Blaberidae</taxon>
        <taxon>Pycnoscelinae</taxon>
        <taxon>Pycnoscelus</taxon>
    </lineage>
</organism>
<accession>P84654</accession>
<dbReference type="GO" id="GO:0005576">
    <property type="term" value="C:extracellular region"/>
    <property type="evidence" value="ECO:0007669"/>
    <property type="project" value="UniProtKB-SubCell"/>
</dbReference>
<dbReference type="GO" id="GO:0007218">
    <property type="term" value="P:neuropeptide signaling pathway"/>
    <property type="evidence" value="ECO:0007669"/>
    <property type="project" value="UniProtKB-KW"/>
</dbReference>
<dbReference type="InterPro" id="IPR013231">
    <property type="entry name" value="Periviscerokinin"/>
</dbReference>
<dbReference type="Pfam" id="PF08259">
    <property type="entry name" value="Periviscerokin"/>
    <property type="match status" value="1"/>
</dbReference>
<keyword id="KW-0027">Amidation</keyword>
<keyword id="KW-0903">Direct protein sequencing</keyword>
<keyword id="KW-0527">Neuropeptide</keyword>
<keyword id="KW-0964">Secreted</keyword>
<sequence>GSPGLIPFGRS</sequence>
<evidence type="ECO:0000255" key="1"/>
<evidence type="ECO:0000269" key="2">
    <source>
    </source>
</evidence>
<evidence type="ECO:0000269" key="3">
    <source ref="2"/>
</evidence>
<evidence type="ECO:0000305" key="4"/>